<comment type="function">
    <text evidence="1">Catalyzes the condensation of iminoaspartate with dihydroxyacetone phosphate to form quinolinate.</text>
</comment>
<comment type="catalytic activity">
    <reaction evidence="1">
        <text>iminosuccinate + dihydroxyacetone phosphate = quinolinate + phosphate + 2 H2O + H(+)</text>
        <dbReference type="Rhea" id="RHEA:25888"/>
        <dbReference type="ChEBI" id="CHEBI:15377"/>
        <dbReference type="ChEBI" id="CHEBI:15378"/>
        <dbReference type="ChEBI" id="CHEBI:29959"/>
        <dbReference type="ChEBI" id="CHEBI:43474"/>
        <dbReference type="ChEBI" id="CHEBI:57642"/>
        <dbReference type="ChEBI" id="CHEBI:77875"/>
        <dbReference type="EC" id="2.5.1.72"/>
    </reaction>
    <physiologicalReaction direction="left-to-right" evidence="1">
        <dbReference type="Rhea" id="RHEA:25889"/>
    </physiologicalReaction>
</comment>
<comment type="cofactor">
    <cofactor evidence="1">
        <name>[4Fe-4S] cluster</name>
        <dbReference type="ChEBI" id="CHEBI:49883"/>
    </cofactor>
    <text evidence="1">Binds 1 [4Fe-4S] cluster per subunit.</text>
</comment>
<comment type="pathway">
    <text evidence="1">Cofactor biosynthesis; NAD(+) biosynthesis; quinolinate from iminoaspartate: step 1/1.</text>
</comment>
<comment type="subcellular location">
    <subcellularLocation>
        <location evidence="1">Cytoplasm</location>
    </subcellularLocation>
</comment>
<comment type="miscellaneous">
    <text>Was identified as a high-confidence drug target.</text>
</comment>
<comment type="similarity">
    <text evidence="1">Belongs to the quinolinate synthase family. Type 2 subfamily.</text>
</comment>
<evidence type="ECO:0000255" key="1">
    <source>
        <dbReference type="HAMAP-Rule" id="MF_00568"/>
    </source>
</evidence>
<reference key="1">
    <citation type="journal article" date="1998" name="Nature">
        <title>Deciphering the biology of Mycobacterium tuberculosis from the complete genome sequence.</title>
        <authorList>
            <person name="Cole S.T."/>
            <person name="Brosch R."/>
            <person name="Parkhill J."/>
            <person name="Garnier T."/>
            <person name="Churcher C.M."/>
            <person name="Harris D.E."/>
            <person name="Gordon S.V."/>
            <person name="Eiglmeier K."/>
            <person name="Gas S."/>
            <person name="Barry C.E. III"/>
            <person name="Tekaia F."/>
            <person name="Badcock K."/>
            <person name="Basham D."/>
            <person name="Brown D."/>
            <person name="Chillingworth T."/>
            <person name="Connor R."/>
            <person name="Davies R.M."/>
            <person name="Devlin K."/>
            <person name="Feltwell T."/>
            <person name="Gentles S."/>
            <person name="Hamlin N."/>
            <person name="Holroyd S."/>
            <person name="Hornsby T."/>
            <person name="Jagels K."/>
            <person name="Krogh A."/>
            <person name="McLean J."/>
            <person name="Moule S."/>
            <person name="Murphy L.D."/>
            <person name="Oliver S."/>
            <person name="Osborne J."/>
            <person name="Quail M.A."/>
            <person name="Rajandream M.A."/>
            <person name="Rogers J."/>
            <person name="Rutter S."/>
            <person name="Seeger K."/>
            <person name="Skelton S."/>
            <person name="Squares S."/>
            <person name="Squares R."/>
            <person name="Sulston J.E."/>
            <person name="Taylor K."/>
            <person name="Whitehead S."/>
            <person name="Barrell B.G."/>
        </authorList>
    </citation>
    <scope>NUCLEOTIDE SEQUENCE [LARGE SCALE GENOMIC DNA]</scope>
    <source>
        <strain>ATCC 25618 / H37Rv</strain>
    </source>
</reference>
<reference key="2">
    <citation type="journal article" date="2008" name="BMC Syst. Biol.">
        <title>targetTB: a target identification pipeline for Mycobacterium tuberculosis through an interactome, reactome and genome-scale structural analysis.</title>
        <authorList>
            <person name="Raman K."/>
            <person name="Yeturu K."/>
            <person name="Chandra N."/>
        </authorList>
    </citation>
    <scope>IDENTIFICATION AS A DRUG TARGET [LARGE SCALE ANALYSIS]</scope>
</reference>
<reference key="3">
    <citation type="journal article" date="2011" name="Mol. Cell. Proteomics">
        <title>Proteogenomic analysis of Mycobacterium tuberculosis by high resolution mass spectrometry.</title>
        <authorList>
            <person name="Kelkar D.S."/>
            <person name="Kumar D."/>
            <person name="Kumar P."/>
            <person name="Balakrishnan L."/>
            <person name="Muthusamy B."/>
            <person name="Yadav A.K."/>
            <person name="Shrivastava P."/>
            <person name="Marimuthu A."/>
            <person name="Anand S."/>
            <person name="Sundaram H."/>
            <person name="Kingsbury R."/>
            <person name="Harsha H.C."/>
            <person name="Nair B."/>
            <person name="Prasad T.S."/>
            <person name="Chauhan D.S."/>
            <person name="Katoch K."/>
            <person name="Katoch V.M."/>
            <person name="Kumar P."/>
            <person name="Chaerkady R."/>
            <person name="Ramachandran S."/>
            <person name="Dash D."/>
            <person name="Pandey A."/>
        </authorList>
    </citation>
    <scope>IDENTIFICATION BY MASS SPECTROMETRY [LARGE SCALE ANALYSIS]</scope>
    <source>
        <strain>ATCC 25618 / H37Rv</strain>
    </source>
</reference>
<proteinExistence type="evidence at protein level"/>
<dbReference type="EC" id="2.5.1.72" evidence="1"/>
<dbReference type="EMBL" id="AL123456">
    <property type="protein sequence ID" value="CCP44358.1"/>
    <property type="molecule type" value="Genomic_DNA"/>
</dbReference>
<dbReference type="PIR" id="D70543">
    <property type="entry name" value="D70543"/>
</dbReference>
<dbReference type="RefSeq" id="NP_216110.1">
    <property type="nucleotide sequence ID" value="NC_000962.3"/>
</dbReference>
<dbReference type="RefSeq" id="WP_003407931.1">
    <property type="nucleotide sequence ID" value="NZ_NVQJ01000016.1"/>
</dbReference>
<dbReference type="SMR" id="P9WJK1"/>
<dbReference type="FunCoup" id="P9WJK1">
    <property type="interactions" value="143"/>
</dbReference>
<dbReference type="STRING" id="83332.Rv1594"/>
<dbReference type="PaxDb" id="83332-Rv1594"/>
<dbReference type="DNASU" id="886283"/>
<dbReference type="GeneID" id="45425562"/>
<dbReference type="GeneID" id="886283"/>
<dbReference type="KEGG" id="mtu:Rv1594"/>
<dbReference type="KEGG" id="mtv:RVBD_1594"/>
<dbReference type="TubercuList" id="Rv1594"/>
<dbReference type="eggNOG" id="COG0379">
    <property type="taxonomic scope" value="Bacteria"/>
</dbReference>
<dbReference type="InParanoid" id="P9WJK1"/>
<dbReference type="OrthoDB" id="9801204at2"/>
<dbReference type="PhylomeDB" id="P9WJK1"/>
<dbReference type="UniPathway" id="UPA00253">
    <property type="reaction ID" value="UER00327"/>
</dbReference>
<dbReference type="Proteomes" id="UP000001584">
    <property type="component" value="Chromosome"/>
</dbReference>
<dbReference type="GO" id="GO:0005829">
    <property type="term" value="C:cytosol"/>
    <property type="evidence" value="ECO:0000318"/>
    <property type="project" value="GO_Central"/>
</dbReference>
<dbReference type="GO" id="GO:0009274">
    <property type="term" value="C:peptidoglycan-based cell wall"/>
    <property type="evidence" value="ECO:0007005"/>
    <property type="project" value="MTBBASE"/>
</dbReference>
<dbReference type="GO" id="GO:0051539">
    <property type="term" value="F:4 iron, 4 sulfur cluster binding"/>
    <property type="evidence" value="ECO:0000314"/>
    <property type="project" value="MTBBASE"/>
</dbReference>
<dbReference type="GO" id="GO:0046872">
    <property type="term" value="F:metal ion binding"/>
    <property type="evidence" value="ECO:0007669"/>
    <property type="project" value="UniProtKB-KW"/>
</dbReference>
<dbReference type="GO" id="GO:0008987">
    <property type="term" value="F:quinolinate synthetase A activity"/>
    <property type="evidence" value="ECO:0000314"/>
    <property type="project" value="MTBBASE"/>
</dbReference>
<dbReference type="GO" id="GO:0034628">
    <property type="term" value="P:'de novo' NAD biosynthetic process from L-aspartate"/>
    <property type="evidence" value="ECO:0000314"/>
    <property type="project" value="MTBBASE"/>
</dbReference>
<dbReference type="FunFam" id="3.40.50.10800:FF:000007">
    <property type="entry name" value="Quinolinate synthase A"/>
    <property type="match status" value="1"/>
</dbReference>
<dbReference type="Gene3D" id="3.40.50.10800">
    <property type="entry name" value="NadA-like"/>
    <property type="match status" value="3"/>
</dbReference>
<dbReference type="HAMAP" id="MF_00568">
    <property type="entry name" value="NadA_type2"/>
    <property type="match status" value="1"/>
</dbReference>
<dbReference type="InterPro" id="IPR003473">
    <property type="entry name" value="NadA"/>
</dbReference>
<dbReference type="InterPro" id="IPR036094">
    <property type="entry name" value="NadA_sf"/>
</dbReference>
<dbReference type="InterPro" id="IPR023066">
    <property type="entry name" value="Quinolinate_synth_type2"/>
</dbReference>
<dbReference type="NCBIfam" id="TIGR00550">
    <property type="entry name" value="nadA"/>
    <property type="match status" value="1"/>
</dbReference>
<dbReference type="NCBIfam" id="NF006878">
    <property type="entry name" value="PRK09375.1-2"/>
    <property type="match status" value="1"/>
</dbReference>
<dbReference type="NCBIfam" id="NF006879">
    <property type="entry name" value="PRK09375.1-4"/>
    <property type="match status" value="1"/>
</dbReference>
<dbReference type="PANTHER" id="PTHR30573:SF0">
    <property type="entry name" value="QUINOLINATE SYNTHASE, CHLOROPLASTIC"/>
    <property type="match status" value="1"/>
</dbReference>
<dbReference type="PANTHER" id="PTHR30573">
    <property type="entry name" value="QUINOLINATE SYNTHETASE A"/>
    <property type="match status" value="1"/>
</dbReference>
<dbReference type="Pfam" id="PF02445">
    <property type="entry name" value="NadA"/>
    <property type="match status" value="1"/>
</dbReference>
<dbReference type="SUPFAM" id="SSF142754">
    <property type="entry name" value="NadA-like"/>
    <property type="match status" value="1"/>
</dbReference>
<keyword id="KW-0004">4Fe-4S</keyword>
<keyword id="KW-0963">Cytoplasm</keyword>
<keyword id="KW-0408">Iron</keyword>
<keyword id="KW-0411">Iron-sulfur</keyword>
<keyword id="KW-0479">Metal-binding</keyword>
<keyword id="KW-0662">Pyridine nucleotide biosynthesis</keyword>
<keyword id="KW-1185">Reference proteome</keyword>
<keyword id="KW-0808">Transferase</keyword>
<name>NADA_MYCTU</name>
<sequence length="349" mass="37408">MTVLNRTDTLVDELTADITNTPLGYGGVDGDERWAAEIRRLAHLRGATVLAHNYQLPAIQDVADHVGDSLALSRVAAEAPEDTIVFCGVHFMAETAKILSPHKTVLIPDQRAGCSLADSITPDELRAWKDEHPGAVVVSYVNTTAAVKALTDICCTSSNAVDVVASIDPDREVLFCPDQFLGAHVRRVTGRKNLHVWAGECHVHAGINGDELADQARAHPDAELFVHPECGCATSALYLAGEGAFPAERVKILSTGGMLEAAHTTRARQVLVATEVGMLHQLRRAAPEVDFRAVNDRASCKYMKMITPAALLRCLVEGADEVHVDPGIAASGRRSVQRMIEIGHPGGGE</sequence>
<organism>
    <name type="scientific">Mycobacterium tuberculosis (strain ATCC 25618 / H37Rv)</name>
    <dbReference type="NCBI Taxonomy" id="83332"/>
    <lineage>
        <taxon>Bacteria</taxon>
        <taxon>Bacillati</taxon>
        <taxon>Actinomycetota</taxon>
        <taxon>Actinomycetes</taxon>
        <taxon>Mycobacteriales</taxon>
        <taxon>Mycobacteriaceae</taxon>
        <taxon>Mycobacterium</taxon>
        <taxon>Mycobacterium tuberculosis complex</taxon>
    </lineage>
</organism>
<accession>P9WJK1</accession>
<accession>L0TA27</accession>
<accession>O06596</accession>
<accession>P65497</accession>
<gene>
    <name evidence="1" type="primary">nadA</name>
    <name type="ordered locus">Rv1594</name>
    <name type="ORF">MTCY336.10c</name>
</gene>
<feature type="chain" id="PRO_0000155791" description="Quinolinate synthase">
    <location>
        <begin position="1"/>
        <end position="349"/>
    </location>
</feature>
<feature type="binding site" evidence="1">
    <location>
        <position position="52"/>
    </location>
    <ligand>
        <name>iminosuccinate</name>
        <dbReference type="ChEBI" id="CHEBI:77875"/>
    </ligand>
</feature>
<feature type="binding site" evidence="1">
    <location>
        <position position="69"/>
    </location>
    <ligand>
        <name>iminosuccinate</name>
        <dbReference type="ChEBI" id="CHEBI:77875"/>
    </ligand>
</feature>
<feature type="binding site" evidence="1">
    <location>
        <position position="114"/>
    </location>
    <ligand>
        <name>[4Fe-4S] cluster</name>
        <dbReference type="ChEBI" id="CHEBI:49883"/>
    </ligand>
</feature>
<feature type="binding site" evidence="1">
    <location>
        <begin position="140"/>
        <end position="142"/>
    </location>
    <ligand>
        <name>iminosuccinate</name>
        <dbReference type="ChEBI" id="CHEBI:77875"/>
    </ligand>
</feature>
<feature type="binding site" evidence="1">
    <location>
        <position position="157"/>
    </location>
    <ligand>
        <name>iminosuccinate</name>
        <dbReference type="ChEBI" id="CHEBI:77875"/>
    </ligand>
</feature>
<feature type="binding site" evidence="1">
    <location>
        <position position="201"/>
    </location>
    <ligand>
        <name>[4Fe-4S] cluster</name>
        <dbReference type="ChEBI" id="CHEBI:49883"/>
    </ligand>
</feature>
<feature type="binding site" evidence="1">
    <location>
        <begin position="227"/>
        <end position="229"/>
    </location>
    <ligand>
        <name>iminosuccinate</name>
        <dbReference type="ChEBI" id="CHEBI:77875"/>
    </ligand>
</feature>
<feature type="binding site" evidence="1">
    <location>
        <position position="255"/>
    </location>
    <ligand>
        <name>iminosuccinate</name>
        <dbReference type="ChEBI" id="CHEBI:77875"/>
    </ligand>
</feature>
<feature type="binding site" evidence="1">
    <location>
        <position position="300"/>
    </location>
    <ligand>
        <name>[4Fe-4S] cluster</name>
        <dbReference type="ChEBI" id="CHEBI:49883"/>
    </ligand>
</feature>
<protein>
    <recommendedName>
        <fullName evidence="1">Quinolinate synthase</fullName>
        <ecNumber evidence="1">2.5.1.72</ecNumber>
    </recommendedName>
</protein>